<sequence length="158" mass="17975">MKADRNLRLCDVVLDETIGRSTPDVEHERAVAIFDLLEENLFEPVGHPGGPYRLNLSLVDAKLVFRISTDGGTEVATHILSLTPFRRIVKDYFMICESYYQAIRSATPSQIEAIDMGRRGIHNEGSQTLMDRLSGKIRLDFDTARRLFTLVCVLYWRG</sequence>
<gene>
    <name type="ordered locus">R00612</name>
    <name type="ORF">SMc02308</name>
</gene>
<comment type="similarity">
    <text evidence="1">Belongs to the UPF0262 family.</text>
</comment>
<proteinExistence type="inferred from homology"/>
<dbReference type="EMBL" id="AL591688">
    <property type="protein sequence ID" value="CAC45184.1"/>
    <property type="molecule type" value="Genomic_DNA"/>
</dbReference>
<dbReference type="RefSeq" id="NP_384718.1">
    <property type="nucleotide sequence ID" value="NC_003047.1"/>
</dbReference>
<dbReference type="RefSeq" id="WP_010968704.1">
    <property type="nucleotide sequence ID" value="NC_003047.1"/>
</dbReference>
<dbReference type="EnsemblBacteria" id="CAC45184">
    <property type="protein sequence ID" value="CAC45184"/>
    <property type="gene ID" value="SMc02308"/>
</dbReference>
<dbReference type="KEGG" id="sme:SMc02308"/>
<dbReference type="PATRIC" id="fig|266834.11.peg.1985"/>
<dbReference type="eggNOG" id="COG5328">
    <property type="taxonomic scope" value="Bacteria"/>
</dbReference>
<dbReference type="HOGENOM" id="CLU_112904_0_0_5"/>
<dbReference type="OrthoDB" id="9798434at2"/>
<dbReference type="Proteomes" id="UP000001976">
    <property type="component" value="Chromosome"/>
</dbReference>
<dbReference type="HAMAP" id="MF_00678">
    <property type="entry name" value="UPF0262"/>
    <property type="match status" value="1"/>
</dbReference>
<dbReference type="InterPro" id="IPR008321">
    <property type="entry name" value="UCP032146"/>
</dbReference>
<dbReference type="NCBIfam" id="NF002769">
    <property type="entry name" value="PRK02853.1"/>
    <property type="match status" value="1"/>
</dbReference>
<dbReference type="Pfam" id="PF06793">
    <property type="entry name" value="UPF0262"/>
    <property type="match status" value="1"/>
</dbReference>
<dbReference type="PIRSF" id="PIRSF032146">
    <property type="entry name" value="UCP032146"/>
    <property type="match status" value="1"/>
</dbReference>
<keyword id="KW-1185">Reference proteome</keyword>
<accession>Q92S25</accession>
<feature type="chain" id="PRO_0000220332" description="UPF0262 protein R00612">
    <location>
        <begin position="1"/>
        <end position="158"/>
    </location>
</feature>
<reference key="1">
    <citation type="journal article" date="2001" name="Proc. Natl. Acad. Sci. U.S.A.">
        <title>Analysis of the chromosome sequence of the legume symbiont Sinorhizobium meliloti strain 1021.</title>
        <authorList>
            <person name="Capela D."/>
            <person name="Barloy-Hubler F."/>
            <person name="Gouzy J."/>
            <person name="Bothe G."/>
            <person name="Ampe F."/>
            <person name="Batut J."/>
            <person name="Boistard P."/>
            <person name="Becker A."/>
            <person name="Boutry M."/>
            <person name="Cadieu E."/>
            <person name="Dreano S."/>
            <person name="Gloux S."/>
            <person name="Godrie T."/>
            <person name="Goffeau A."/>
            <person name="Kahn D."/>
            <person name="Kiss E."/>
            <person name="Lelaure V."/>
            <person name="Masuy D."/>
            <person name="Pohl T."/>
            <person name="Portetelle D."/>
            <person name="Puehler A."/>
            <person name="Purnelle B."/>
            <person name="Ramsperger U."/>
            <person name="Renard C."/>
            <person name="Thebault P."/>
            <person name="Vandenbol M."/>
            <person name="Weidner S."/>
            <person name="Galibert F."/>
        </authorList>
    </citation>
    <scope>NUCLEOTIDE SEQUENCE [LARGE SCALE GENOMIC DNA]</scope>
    <source>
        <strain>1021</strain>
    </source>
</reference>
<reference key="2">
    <citation type="journal article" date="2001" name="Science">
        <title>The composite genome of the legume symbiont Sinorhizobium meliloti.</title>
        <authorList>
            <person name="Galibert F."/>
            <person name="Finan T.M."/>
            <person name="Long S.R."/>
            <person name="Puehler A."/>
            <person name="Abola P."/>
            <person name="Ampe F."/>
            <person name="Barloy-Hubler F."/>
            <person name="Barnett M.J."/>
            <person name="Becker A."/>
            <person name="Boistard P."/>
            <person name="Bothe G."/>
            <person name="Boutry M."/>
            <person name="Bowser L."/>
            <person name="Buhrmester J."/>
            <person name="Cadieu E."/>
            <person name="Capela D."/>
            <person name="Chain P."/>
            <person name="Cowie A."/>
            <person name="Davis R.W."/>
            <person name="Dreano S."/>
            <person name="Federspiel N.A."/>
            <person name="Fisher R.F."/>
            <person name="Gloux S."/>
            <person name="Godrie T."/>
            <person name="Goffeau A."/>
            <person name="Golding B."/>
            <person name="Gouzy J."/>
            <person name="Gurjal M."/>
            <person name="Hernandez-Lucas I."/>
            <person name="Hong A."/>
            <person name="Huizar L."/>
            <person name="Hyman R.W."/>
            <person name="Jones T."/>
            <person name="Kahn D."/>
            <person name="Kahn M.L."/>
            <person name="Kalman S."/>
            <person name="Keating D.H."/>
            <person name="Kiss E."/>
            <person name="Komp C."/>
            <person name="Lelaure V."/>
            <person name="Masuy D."/>
            <person name="Palm C."/>
            <person name="Peck M.C."/>
            <person name="Pohl T.M."/>
            <person name="Portetelle D."/>
            <person name="Purnelle B."/>
            <person name="Ramsperger U."/>
            <person name="Surzycki R."/>
            <person name="Thebault P."/>
            <person name="Vandenbol M."/>
            <person name="Vorhoelter F.J."/>
            <person name="Weidner S."/>
            <person name="Wells D.H."/>
            <person name="Wong K."/>
            <person name="Yeh K.-C."/>
            <person name="Batut J."/>
        </authorList>
    </citation>
    <scope>NUCLEOTIDE SEQUENCE [LARGE SCALE GENOMIC DNA]</scope>
    <source>
        <strain>1021</strain>
    </source>
</reference>
<organism>
    <name type="scientific">Rhizobium meliloti (strain 1021)</name>
    <name type="common">Ensifer meliloti</name>
    <name type="synonym">Sinorhizobium meliloti</name>
    <dbReference type="NCBI Taxonomy" id="266834"/>
    <lineage>
        <taxon>Bacteria</taxon>
        <taxon>Pseudomonadati</taxon>
        <taxon>Pseudomonadota</taxon>
        <taxon>Alphaproteobacteria</taxon>
        <taxon>Hyphomicrobiales</taxon>
        <taxon>Rhizobiaceae</taxon>
        <taxon>Sinorhizobium/Ensifer group</taxon>
        <taxon>Sinorhizobium</taxon>
    </lineage>
</organism>
<evidence type="ECO:0000255" key="1">
    <source>
        <dbReference type="HAMAP-Rule" id="MF_00678"/>
    </source>
</evidence>
<name>Y612_RHIME</name>
<protein>
    <recommendedName>
        <fullName evidence="1">UPF0262 protein R00612</fullName>
    </recommendedName>
</protein>